<organism>
    <name type="scientific">Pan troglodytes</name>
    <name type="common">Chimpanzee</name>
    <dbReference type="NCBI Taxonomy" id="9598"/>
    <lineage>
        <taxon>Eukaryota</taxon>
        <taxon>Metazoa</taxon>
        <taxon>Chordata</taxon>
        <taxon>Craniata</taxon>
        <taxon>Vertebrata</taxon>
        <taxon>Euteleostomi</taxon>
        <taxon>Mammalia</taxon>
        <taxon>Eutheria</taxon>
        <taxon>Euarchontoglires</taxon>
        <taxon>Primates</taxon>
        <taxon>Haplorrhini</taxon>
        <taxon>Catarrhini</taxon>
        <taxon>Hominidae</taxon>
        <taxon>Pan</taxon>
    </lineage>
</organism>
<proteinExistence type="inferred from homology"/>
<feature type="signal peptide" evidence="2">
    <location>
        <begin position="1"/>
        <end position="31"/>
    </location>
</feature>
<feature type="chain" id="PRO_0000003986" description="Protocadherin gamma-C3">
    <location>
        <begin position="32"/>
        <end position="934"/>
    </location>
</feature>
<feature type="topological domain" description="Extracellular" evidence="2">
    <location>
        <begin position="32"/>
        <end position="693"/>
    </location>
</feature>
<feature type="transmembrane region" description="Helical" evidence="2">
    <location>
        <begin position="694"/>
        <end position="714"/>
    </location>
</feature>
<feature type="topological domain" description="Cytoplasmic" evidence="2">
    <location>
        <begin position="715"/>
        <end position="934"/>
    </location>
</feature>
<feature type="domain" description="Cadherin 1" evidence="3">
    <location>
        <begin position="32"/>
        <end position="135"/>
    </location>
</feature>
<feature type="domain" description="Cadherin 2" evidence="3">
    <location>
        <begin position="136"/>
        <end position="244"/>
    </location>
</feature>
<feature type="domain" description="Cadherin 3" evidence="3">
    <location>
        <begin position="245"/>
        <end position="352"/>
    </location>
</feature>
<feature type="domain" description="Cadherin 4" evidence="3">
    <location>
        <begin position="353"/>
        <end position="457"/>
    </location>
</feature>
<feature type="domain" description="Cadherin 5" evidence="3">
    <location>
        <begin position="458"/>
        <end position="567"/>
    </location>
</feature>
<feature type="domain" description="Cadherin 6" evidence="3">
    <location>
        <begin position="572"/>
        <end position="685"/>
    </location>
</feature>
<feature type="region of interest" description="Disordered" evidence="4">
    <location>
        <begin position="804"/>
        <end position="843"/>
    </location>
</feature>
<feature type="region of interest" description="Disordered" evidence="4">
    <location>
        <begin position="904"/>
        <end position="934"/>
    </location>
</feature>
<feature type="compositionally biased region" description="Polar residues" evidence="4">
    <location>
        <begin position="812"/>
        <end position="843"/>
    </location>
</feature>
<feature type="compositionally biased region" description="Basic residues" evidence="4">
    <location>
        <begin position="924"/>
        <end position="934"/>
    </location>
</feature>
<feature type="glycosylation site" description="N-linked (GlcNAc...) asparagine" evidence="2">
    <location>
        <position position="245"/>
    </location>
</feature>
<feature type="glycosylation site" description="N-linked (GlcNAc...) asparagine" evidence="2">
    <location>
        <position position="424"/>
    </location>
</feature>
<feature type="glycosylation site" description="N-linked (GlcNAc...) asparagine" evidence="2">
    <location>
        <position position="478"/>
    </location>
</feature>
<feature type="glycosylation site" description="N-linked (GlcNAc...) asparagine" evidence="2">
    <location>
        <position position="550"/>
    </location>
</feature>
<feature type="glycosylation site" description="N-linked (GlcNAc...) asparagine" evidence="2">
    <location>
        <position position="615"/>
    </location>
</feature>
<feature type="glycosylation site" description="N-linked (GlcNAc...) asparagine" evidence="2">
    <location>
        <position position="689"/>
    </location>
</feature>
<dbReference type="RefSeq" id="NP_001076040.1">
    <property type="nucleotide sequence ID" value="NM_001082571.4"/>
</dbReference>
<dbReference type="SMR" id="Q5DRA4"/>
<dbReference type="FunCoup" id="Q5DRA4">
    <property type="interactions" value="317"/>
</dbReference>
<dbReference type="GlyCosmos" id="Q5DRA4">
    <property type="glycosylation" value="6 sites, No reported glycans"/>
</dbReference>
<dbReference type="Ensembl" id="ENSPTRT00000032093.5">
    <property type="protein sequence ID" value="ENSPTRP00000029647.4"/>
    <property type="gene ID" value="ENSPTRG00000017346.7"/>
</dbReference>
<dbReference type="GeneID" id="100034695"/>
<dbReference type="KEGG" id="ptr:100034695"/>
<dbReference type="CTD" id="5098"/>
<dbReference type="GeneTree" id="ENSGT00940000162232"/>
<dbReference type="InParanoid" id="Q5DRA4"/>
<dbReference type="Proteomes" id="UP000002277">
    <property type="component" value="Chromosome 5"/>
</dbReference>
<dbReference type="Bgee" id="ENSPTRG00000017346">
    <property type="expression patterns" value="Expressed in dorsolateral prefrontal cortex and 21 other cell types or tissues"/>
</dbReference>
<dbReference type="GO" id="GO:0005886">
    <property type="term" value="C:plasma membrane"/>
    <property type="evidence" value="ECO:0007669"/>
    <property type="project" value="UniProtKB-SubCell"/>
</dbReference>
<dbReference type="GO" id="GO:0005509">
    <property type="term" value="F:calcium ion binding"/>
    <property type="evidence" value="ECO:0007669"/>
    <property type="project" value="InterPro"/>
</dbReference>
<dbReference type="GO" id="GO:0007156">
    <property type="term" value="P:homophilic cell adhesion via plasma membrane adhesion molecules"/>
    <property type="evidence" value="ECO:0007669"/>
    <property type="project" value="InterPro"/>
</dbReference>
<dbReference type="GO" id="GO:0007399">
    <property type="term" value="P:nervous system development"/>
    <property type="evidence" value="ECO:0007669"/>
    <property type="project" value="UniProtKB-ARBA"/>
</dbReference>
<dbReference type="CDD" id="cd11304">
    <property type="entry name" value="Cadherin_repeat"/>
    <property type="match status" value="6"/>
</dbReference>
<dbReference type="FunFam" id="2.60.40.60:FF:000004">
    <property type="entry name" value="Protocadherin 1 gamma 2"/>
    <property type="match status" value="1"/>
</dbReference>
<dbReference type="FunFam" id="2.60.40.60:FF:000185">
    <property type="entry name" value="Protocadherin 2 alpha c"/>
    <property type="match status" value="1"/>
</dbReference>
<dbReference type="FunFam" id="2.60.40.60:FF:000001">
    <property type="entry name" value="Protocadherin alpha 2"/>
    <property type="match status" value="1"/>
</dbReference>
<dbReference type="FunFam" id="2.60.40.60:FF:000002">
    <property type="entry name" value="Protocadherin alpha 2"/>
    <property type="match status" value="1"/>
</dbReference>
<dbReference type="FunFam" id="2.60.40.60:FF:000006">
    <property type="entry name" value="Protocadherin alpha 2"/>
    <property type="match status" value="1"/>
</dbReference>
<dbReference type="FunFam" id="2.60.40.60:FF:000018">
    <property type="entry name" value="Protocadherin gamma c3"/>
    <property type="match status" value="1"/>
</dbReference>
<dbReference type="Gene3D" id="2.60.40.60">
    <property type="entry name" value="Cadherins"/>
    <property type="match status" value="6"/>
</dbReference>
<dbReference type="InterPro" id="IPR002126">
    <property type="entry name" value="Cadherin-like_dom"/>
</dbReference>
<dbReference type="InterPro" id="IPR015919">
    <property type="entry name" value="Cadherin-like_sf"/>
</dbReference>
<dbReference type="InterPro" id="IPR032455">
    <property type="entry name" value="Cadherin_C"/>
</dbReference>
<dbReference type="InterPro" id="IPR031904">
    <property type="entry name" value="Cadherin_CBD"/>
</dbReference>
<dbReference type="InterPro" id="IPR020894">
    <property type="entry name" value="Cadherin_CS"/>
</dbReference>
<dbReference type="InterPro" id="IPR013164">
    <property type="entry name" value="Cadherin_N"/>
</dbReference>
<dbReference type="InterPro" id="IPR050174">
    <property type="entry name" value="Protocadherin/Cadherin-CA"/>
</dbReference>
<dbReference type="PANTHER" id="PTHR24028">
    <property type="entry name" value="CADHERIN-87A"/>
    <property type="match status" value="1"/>
</dbReference>
<dbReference type="PANTHER" id="PTHR24028:SF236">
    <property type="entry name" value="PROTOCADHERIN GAMMA-C3"/>
    <property type="match status" value="1"/>
</dbReference>
<dbReference type="Pfam" id="PF00028">
    <property type="entry name" value="Cadherin"/>
    <property type="match status" value="5"/>
</dbReference>
<dbReference type="Pfam" id="PF08266">
    <property type="entry name" value="Cadherin_2"/>
    <property type="match status" value="1"/>
</dbReference>
<dbReference type="Pfam" id="PF16492">
    <property type="entry name" value="Cadherin_C_2"/>
    <property type="match status" value="1"/>
</dbReference>
<dbReference type="Pfam" id="PF15974">
    <property type="entry name" value="Cadherin_tail"/>
    <property type="match status" value="1"/>
</dbReference>
<dbReference type="PRINTS" id="PR00205">
    <property type="entry name" value="CADHERIN"/>
</dbReference>
<dbReference type="SMART" id="SM00112">
    <property type="entry name" value="CA"/>
    <property type="match status" value="6"/>
</dbReference>
<dbReference type="SUPFAM" id="SSF49313">
    <property type="entry name" value="Cadherin-like"/>
    <property type="match status" value="6"/>
</dbReference>
<dbReference type="PROSITE" id="PS00232">
    <property type="entry name" value="CADHERIN_1"/>
    <property type="match status" value="5"/>
</dbReference>
<dbReference type="PROSITE" id="PS50268">
    <property type="entry name" value="CADHERIN_2"/>
    <property type="match status" value="6"/>
</dbReference>
<protein>
    <recommendedName>
        <fullName>Protocadherin gamma-C3</fullName>
        <shortName>PCDH-gamma-C3</shortName>
    </recommendedName>
</protein>
<comment type="function">
    <text>Potential calcium-dependent cell-adhesion protein. May be involved in the establishment and maintenance of specific neuronal connections in the brain.</text>
</comment>
<comment type="subcellular location">
    <subcellularLocation>
        <location evidence="1">Cell membrane</location>
        <topology evidence="1">Single-pass type I membrane protein</topology>
    </subcellularLocation>
</comment>
<keyword id="KW-0106">Calcium</keyword>
<keyword id="KW-0130">Cell adhesion</keyword>
<keyword id="KW-1003">Cell membrane</keyword>
<keyword id="KW-0325">Glycoprotein</keyword>
<keyword id="KW-0472">Membrane</keyword>
<keyword id="KW-1185">Reference proteome</keyword>
<keyword id="KW-0677">Repeat</keyword>
<keyword id="KW-0732">Signal</keyword>
<keyword id="KW-0812">Transmembrane</keyword>
<keyword id="KW-1133">Transmembrane helix</keyword>
<accession>Q5DRA4</accession>
<evidence type="ECO:0000250" key="1"/>
<evidence type="ECO:0000255" key="2"/>
<evidence type="ECO:0000255" key="3">
    <source>
        <dbReference type="PROSITE-ProRule" id="PRU00043"/>
    </source>
</evidence>
<evidence type="ECO:0000256" key="4">
    <source>
        <dbReference type="SAM" id="MobiDB-lite"/>
    </source>
</evidence>
<reference key="1">
    <citation type="journal article" date="2005" name="Nature">
        <title>Initial sequence of the chimpanzee genome and comparison with the human genome.</title>
        <authorList>
            <consortium name="Chimpanzee sequencing and analysis consortium"/>
        </authorList>
    </citation>
    <scope>NUCLEOTIDE SEQUENCE [LARGE SCALE GENOMIC DNA]</scope>
</reference>
<reference key="2">
    <citation type="journal article" date="2005" name="Genetics">
        <title>Comparative genomics and diversifying selection of the clustered vertebrate protocadherin genes.</title>
        <authorList>
            <person name="Wu Q."/>
        </authorList>
    </citation>
    <scope>IDENTIFICATION</scope>
</reference>
<sequence length="934" mass="101064">MVPEAWRSGLVSTGRVVGVLLLLGALNKASTVIHYEIPEEREKGFAVGNVVANLGLDLGSLSARRFRVVSGASRRFFEVNRETGEMFVNDRLDREELCGTLPSCTVTLELVVENPLELFSVEVVIQDINDNNPAFPTQEMKLEISEAVAPGTRFPLESAHDPDVGSNSLQTYELSRNEYFALRVQTREDSTKYAELVLERALDREREPSLQLVLTALDGGTPALSASLPIHIKVLDANDNAPVFNQSLYRARVLEDAPSGTRVVQVLATDLDEGPNGEIIYSFGSHNRAGVRELFALDLVTGMLTIKGRLDFEDTKLHEIYIQAKDKGANPEGAHCKVLVEVVDVNDNAPEITVTSVYSPVPEDAPLGTVIALLSVTDLDAGENGLVTCEVPPGLPFSLTSSLKNYFTLKTSADLDRETVPEYNLSITARDAGTPSLSALTIVRVQVSDINDNPPQSSQSSYDVYIEENNLPGAPILNLSVWDPDAPQNARLSFFLLEQGAETGLVGRYFTINRDNGIVSSLVPLDYEDRREFELTAHISDGGTPVLATNISVNIFVTDRNDNAPQVLYPRPGGSSVEMLPRGTSAGHLVSRVVGWDADAGHNAWLSYSLLGSPNQSLFAIGLHTGQISTARPVQDTDSPRQTLTVLIKDNGEPSLSTTATLTVSVTEDSPEARAEFPSGSAPREQNKNLTFYLLLSLILVSVGFVVTVFGVIIFKVYKWKQSRDLYRAPVSSLYRTPGPSLHADAVRGGLMSPHLYHQVYLTTDSRRSDPLLKKPGAASPLASRQNTLRSCDPVFYRQVLGAESAPPGQQAPPNTDWRFSQAQRPGTSGSQNGDDTGTWPNNQFDTEMLQAMILASASEAADGSSTLGGGAGTMGLSARYGPQFTLQHVPDYRQNVYIPGSNATLTNAAGKRDGKAPAGGNGNKKKSGKKEKK</sequence>
<gene>
    <name type="primary">PCDHGC3</name>
</gene>
<name>PCDGK_PANTR</name>